<comment type="function">
    <text evidence="1">Catalyzes the dehydration of D-mannonate.</text>
</comment>
<comment type="catalytic activity">
    <reaction evidence="1">
        <text>D-mannonate = 2-dehydro-3-deoxy-D-gluconate + H2O</text>
        <dbReference type="Rhea" id="RHEA:20097"/>
        <dbReference type="ChEBI" id="CHEBI:15377"/>
        <dbReference type="ChEBI" id="CHEBI:17767"/>
        <dbReference type="ChEBI" id="CHEBI:57990"/>
        <dbReference type="EC" id="4.2.1.8"/>
    </reaction>
</comment>
<comment type="cofactor">
    <cofactor evidence="1">
        <name>Fe(2+)</name>
        <dbReference type="ChEBI" id="CHEBI:29033"/>
    </cofactor>
    <cofactor evidence="1">
        <name>Mn(2+)</name>
        <dbReference type="ChEBI" id="CHEBI:29035"/>
    </cofactor>
</comment>
<comment type="pathway">
    <text evidence="1">Carbohydrate metabolism; pentose and glucuronate interconversion.</text>
</comment>
<comment type="similarity">
    <text evidence="1">Belongs to the mannonate dehydratase family.</text>
</comment>
<dbReference type="EC" id="4.2.1.8" evidence="1"/>
<dbReference type="EMBL" id="CP000969">
    <property type="protein sequence ID" value="ACB09230.1"/>
    <property type="molecule type" value="Genomic_DNA"/>
</dbReference>
<dbReference type="RefSeq" id="WP_011943439.1">
    <property type="nucleotide sequence ID" value="NC_010483.1"/>
</dbReference>
<dbReference type="SMR" id="B1LA82"/>
<dbReference type="KEGG" id="trq:TRQ2_0878"/>
<dbReference type="HOGENOM" id="CLU_058621_1_0_0"/>
<dbReference type="UniPathway" id="UPA00246"/>
<dbReference type="Proteomes" id="UP000001687">
    <property type="component" value="Chromosome"/>
</dbReference>
<dbReference type="GO" id="GO:0008198">
    <property type="term" value="F:ferrous iron binding"/>
    <property type="evidence" value="ECO:0007669"/>
    <property type="project" value="TreeGrafter"/>
</dbReference>
<dbReference type="GO" id="GO:0030145">
    <property type="term" value="F:manganese ion binding"/>
    <property type="evidence" value="ECO:0007669"/>
    <property type="project" value="TreeGrafter"/>
</dbReference>
<dbReference type="GO" id="GO:0008927">
    <property type="term" value="F:mannonate dehydratase activity"/>
    <property type="evidence" value="ECO:0007669"/>
    <property type="project" value="UniProtKB-UniRule"/>
</dbReference>
<dbReference type="GO" id="GO:0042840">
    <property type="term" value="P:D-glucuronate catabolic process"/>
    <property type="evidence" value="ECO:0007669"/>
    <property type="project" value="TreeGrafter"/>
</dbReference>
<dbReference type="Gene3D" id="3.20.20.150">
    <property type="entry name" value="Divalent-metal-dependent TIM barrel enzymes"/>
    <property type="match status" value="1"/>
</dbReference>
<dbReference type="HAMAP" id="MF_00106">
    <property type="entry name" value="UxuA"/>
    <property type="match status" value="1"/>
</dbReference>
<dbReference type="InterPro" id="IPR004628">
    <property type="entry name" value="Man_deHydtase"/>
</dbReference>
<dbReference type="InterPro" id="IPR036237">
    <property type="entry name" value="Xyl_isomerase-like_sf"/>
</dbReference>
<dbReference type="NCBIfam" id="NF003027">
    <property type="entry name" value="PRK03906.1"/>
    <property type="match status" value="1"/>
</dbReference>
<dbReference type="NCBIfam" id="TIGR00695">
    <property type="entry name" value="uxuA"/>
    <property type="match status" value="1"/>
</dbReference>
<dbReference type="PANTHER" id="PTHR30387">
    <property type="entry name" value="MANNONATE DEHYDRATASE"/>
    <property type="match status" value="1"/>
</dbReference>
<dbReference type="PANTHER" id="PTHR30387:SF2">
    <property type="entry name" value="MANNONATE DEHYDRATASE"/>
    <property type="match status" value="1"/>
</dbReference>
<dbReference type="Pfam" id="PF03786">
    <property type="entry name" value="UxuA"/>
    <property type="match status" value="1"/>
</dbReference>
<dbReference type="PIRSF" id="PIRSF016049">
    <property type="entry name" value="Man_dehyd"/>
    <property type="match status" value="1"/>
</dbReference>
<dbReference type="SUPFAM" id="SSF51658">
    <property type="entry name" value="Xylose isomerase-like"/>
    <property type="match status" value="1"/>
</dbReference>
<sequence length="360" mass="41857">MKLVFRWYGEKHDTVTLEQIRQIPGVEGVVGALFDIPVGEVWPLEEIMKLKETVEKAGLKLEVIESVNVHEDIKLGLPTRDRYIENYKETIRNLAKAGVKVVCYNFMPVFDWMRTDLHKKLPDGSETMEYDHRLIEGVTPDELIKRVKEGSQGFVLPGWEWDRLEKLRETFELYKNVDEEKLFENLVYFLERVIPVCEECDVKLAIHPDDPPWSIFGLPRIITNKENIERMLKAVDSPYNGITFCMGSLGANPENNIPEMIRYFGKMGRIHFAHVRNLKFTGEKSFYETAHPSFCGSHDLFEVMKAFHDIGYEGYIRPDHGRLIWGEKARPGYGLYDRALGATYILGLWEAIDKMKKRYC</sequence>
<accession>B1LA82</accession>
<feature type="chain" id="PRO_1000094227" description="Mannonate dehydratase">
    <location>
        <begin position="1"/>
        <end position="360"/>
    </location>
</feature>
<gene>
    <name evidence="1" type="primary">uxuA</name>
    <name type="ordered locus">TRQ2_0878</name>
</gene>
<reference key="1">
    <citation type="journal article" date="2011" name="J. Bacteriol.">
        <title>Genome sequence of Thermotoga sp. strain RQ2, a hyperthermophilic bacterium isolated from a geothermally heated region of the seafloor near Ribeira Quente, the Azores.</title>
        <authorList>
            <person name="Swithers K.S."/>
            <person name="DiPippo J.L."/>
            <person name="Bruce D.C."/>
            <person name="Detter C."/>
            <person name="Tapia R."/>
            <person name="Han S."/>
            <person name="Saunders E."/>
            <person name="Goodwin L.A."/>
            <person name="Han J."/>
            <person name="Woyke T."/>
            <person name="Pitluck S."/>
            <person name="Pennacchio L."/>
            <person name="Nolan M."/>
            <person name="Mikhailova N."/>
            <person name="Lykidis A."/>
            <person name="Land M.L."/>
            <person name="Brettin T."/>
            <person name="Stetter K.O."/>
            <person name="Nelson K.E."/>
            <person name="Gogarten J.P."/>
            <person name="Noll K.M."/>
        </authorList>
    </citation>
    <scope>NUCLEOTIDE SEQUENCE [LARGE SCALE GENOMIC DNA]</scope>
    <source>
        <strain>RQ2</strain>
    </source>
</reference>
<proteinExistence type="inferred from homology"/>
<organism>
    <name type="scientific">Thermotoga sp. (strain RQ2)</name>
    <dbReference type="NCBI Taxonomy" id="126740"/>
    <lineage>
        <taxon>Bacteria</taxon>
        <taxon>Thermotogati</taxon>
        <taxon>Thermotogota</taxon>
        <taxon>Thermotogae</taxon>
        <taxon>Thermotogales</taxon>
        <taxon>Thermotogaceae</taxon>
        <taxon>Thermotoga</taxon>
    </lineage>
</organism>
<protein>
    <recommendedName>
        <fullName evidence="1">Mannonate dehydratase</fullName>
        <ecNumber evidence="1">4.2.1.8</ecNumber>
    </recommendedName>
    <alternativeName>
        <fullName evidence="1">D-mannonate hydro-lyase</fullName>
    </alternativeName>
</protein>
<evidence type="ECO:0000255" key="1">
    <source>
        <dbReference type="HAMAP-Rule" id="MF_00106"/>
    </source>
</evidence>
<name>UXUA_THESQ</name>
<keyword id="KW-0408">Iron</keyword>
<keyword id="KW-0456">Lyase</keyword>
<keyword id="KW-0464">Manganese</keyword>